<name>ARPC2_RAT</name>
<keyword id="KW-0007">Acetylation</keyword>
<keyword id="KW-0009">Actin-binding</keyword>
<keyword id="KW-0966">Cell projection</keyword>
<keyword id="KW-0963">Cytoplasm</keyword>
<keyword id="KW-0206">Cytoskeleton</keyword>
<keyword id="KW-0539">Nucleus</keyword>
<keyword id="KW-1185">Reference proteome</keyword>
<keyword id="KW-0770">Synapse</keyword>
<keyword id="KW-0771">Synaptosome</keyword>
<proteinExistence type="evidence at protein level"/>
<protein>
    <recommendedName>
        <fullName evidence="1">Actin-related protein 2/3 complex subunit 2</fullName>
    </recommendedName>
    <alternativeName>
        <fullName evidence="1">Arp2/3 complex 34 kDa subunit</fullName>
        <shortName evidence="1">p34-ARC</shortName>
    </alternativeName>
</protein>
<dbReference type="EMBL" id="AABR03068131">
    <property type="status" value="NOT_ANNOTATED_CDS"/>
    <property type="molecule type" value="Genomic_DNA"/>
</dbReference>
<dbReference type="EMBL" id="AABR03068820">
    <property type="status" value="NOT_ANNOTATED_CDS"/>
    <property type="molecule type" value="Genomic_DNA"/>
</dbReference>
<dbReference type="EMBL" id="AABR03069184">
    <property type="status" value="NOT_ANNOTATED_CDS"/>
    <property type="molecule type" value="Genomic_DNA"/>
</dbReference>
<dbReference type="SMR" id="P85970"/>
<dbReference type="FunCoup" id="P85970">
    <property type="interactions" value="3047"/>
</dbReference>
<dbReference type="IntAct" id="P85970">
    <property type="interactions" value="3"/>
</dbReference>
<dbReference type="MINT" id="P85970"/>
<dbReference type="STRING" id="10116.ENSRNOP00000019265"/>
<dbReference type="GlyGen" id="P85970">
    <property type="glycosylation" value="1 site, 1 O-linked glycan (1 site)"/>
</dbReference>
<dbReference type="iPTMnet" id="P85970"/>
<dbReference type="PhosphoSitePlus" id="P85970"/>
<dbReference type="jPOST" id="P85970"/>
<dbReference type="PaxDb" id="10116-ENSRNOP00000019265"/>
<dbReference type="UCSC" id="RGD:1305848">
    <property type="organism name" value="rat"/>
</dbReference>
<dbReference type="AGR" id="RGD:1305848"/>
<dbReference type="RGD" id="1305848">
    <property type="gene designation" value="Arpc2"/>
</dbReference>
<dbReference type="eggNOG" id="KOG2826">
    <property type="taxonomic scope" value="Eukaryota"/>
</dbReference>
<dbReference type="InParanoid" id="P85970"/>
<dbReference type="PhylomeDB" id="P85970"/>
<dbReference type="TreeFam" id="TF315006"/>
<dbReference type="Reactome" id="R-RNO-2029482">
    <property type="pathway name" value="Regulation of actin dynamics for phagocytic cup formation"/>
</dbReference>
<dbReference type="Reactome" id="R-RNO-3928662">
    <property type="pathway name" value="EPHB-mediated forward signaling"/>
</dbReference>
<dbReference type="Reactome" id="R-RNO-5663213">
    <property type="pathway name" value="RHO GTPases Activate WASPs and WAVEs"/>
</dbReference>
<dbReference type="Reactome" id="R-RNO-8856828">
    <property type="pathway name" value="Clathrin-mediated endocytosis"/>
</dbReference>
<dbReference type="PRO" id="PR:P85970"/>
<dbReference type="Proteomes" id="UP000002494">
    <property type="component" value="Unplaced"/>
</dbReference>
<dbReference type="GO" id="GO:0061834">
    <property type="term" value="C:actin filament branch point"/>
    <property type="evidence" value="ECO:0000314"/>
    <property type="project" value="RGD"/>
</dbReference>
<dbReference type="GO" id="GO:0097440">
    <property type="term" value="C:apical dendrite"/>
    <property type="evidence" value="ECO:0000314"/>
    <property type="project" value="RGD"/>
</dbReference>
<dbReference type="GO" id="GO:0005885">
    <property type="term" value="C:Arp2/3 protein complex"/>
    <property type="evidence" value="ECO:0000250"/>
    <property type="project" value="UniProtKB"/>
</dbReference>
<dbReference type="GO" id="GO:0043679">
    <property type="term" value="C:axon terminus"/>
    <property type="evidence" value="ECO:0000314"/>
    <property type="project" value="RGD"/>
</dbReference>
<dbReference type="GO" id="GO:0031252">
    <property type="term" value="C:cell leading edge"/>
    <property type="evidence" value="ECO:0000314"/>
    <property type="project" value="RGD"/>
</dbReference>
<dbReference type="GO" id="GO:0009986">
    <property type="term" value="C:cell surface"/>
    <property type="evidence" value="ECO:0000314"/>
    <property type="project" value="RGD"/>
</dbReference>
<dbReference type="GO" id="GO:0061830">
    <property type="term" value="C:concave side of sperm head"/>
    <property type="evidence" value="ECO:0000314"/>
    <property type="project" value="RGD"/>
</dbReference>
<dbReference type="GO" id="GO:0043198">
    <property type="term" value="C:dendritic shaft"/>
    <property type="evidence" value="ECO:0000314"/>
    <property type="project" value="RGD"/>
</dbReference>
<dbReference type="GO" id="GO:0043197">
    <property type="term" value="C:dendritic spine"/>
    <property type="evidence" value="ECO:0000314"/>
    <property type="project" value="RGD"/>
</dbReference>
<dbReference type="GO" id="GO:0005768">
    <property type="term" value="C:endosome"/>
    <property type="evidence" value="ECO:0000266"/>
    <property type="project" value="RGD"/>
</dbReference>
<dbReference type="GO" id="GO:0031941">
    <property type="term" value="C:filamentous actin"/>
    <property type="evidence" value="ECO:0000314"/>
    <property type="project" value="RGD"/>
</dbReference>
<dbReference type="GO" id="GO:0005925">
    <property type="term" value="C:focal adhesion"/>
    <property type="evidence" value="ECO:0000266"/>
    <property type="project" value="RGD"/>
</dbReference>
<dbReference type="GO" id="GO:0098978">
    <property type="term" value="C:glutamatergic synapse"/>
    <property type="evidence" value="ECO:0000266"/>
    <property type="project" value="RGD"/>
</dbReference>
<dbReference type="GO" id="GO:0030426">
    <property type="term" value="C:growth cone"/>
    <property type="evidence" value="ECO:0000314"/>
    <property type="project" value="RGD"/>
</dbReference>
<dbReference type="GO" id="GO:0030027">
    <property type="term" value="C:lamellipodium"/>
    <property type="evidence" value="ECO:0000314"/>
    <property type="project" value="RGD"/>
</dbReference>
<dbReference type="GO" id="GO:0036195">
    <property type="term" value="C:muscle cell projection membrane"/>
    <property type="evidence" value="ECO:0000266"/>
    <property type="project" value="RGD"/>
</dbReference>
<dbReference type="GO" id="GO:0005634">
    <property type="term" value="C:nucleus"/>
    <property type="evidence" value="ECO:0000250"/>
    <property type="project" value="UniProtKB"/>
</dbReference>
<dbReference type="GO" id="GO:0043204">
    <property type="term" value="C:perikaryon"/>
    <property type="evidence" value="ECO:0000314"/>
    <property type="project" value="RGD"/>
</dbReference>
<dbReference type="GO" id="GO:0090725">
    <property type="term" value="C:peripheral region of growth cone"/>
    <property type="evidence" value="ECO:0000314"/>
    <property type="project" value="RGD"/>
</dbReference>
<dbReference type="GO" id="GO:0005886">
    <property type="term" value="C:plasma membrane"/>
    <property type="evidence" value="ECO:0000266"/>
    <property type="project" value="RGD"/>
</dbReference>
<dbReference type="GO" id="GO:0061825">
    <property type="term" value="C:podosome core"/>
    <property type="evidence" value="ECO:0000314"/>
    <property type="project" value="RGD"/>
</dbReference>
<dbReference type="GO" id="GO:0061826">
    <property type="term" value="C:podosome ring"/>
    <property type="evidence" value="ECO:0000314"/>
    <property type="project" value="RGD"/>
</dbReference>
<dbReference type="GO" id="GO:0098794">
    <property type="term" value="C:postsynapse"/>
    <property type="evidence" value="ECO:0000314"/>
    <property type="project" value="SynGO"/>
</dbReference>
<dbReference type="GO" id="GO:0098793">
    <property type="term" value="C:presynapse"/>
    <property type="evidence" value="ECO:0000266"/>
    <property type="project" value="RGD"/>
</dbReference>
<dbReference type="GO" id="GO:0032587">
    <property type="term" value="C:ruffle membrane"/>
    <property type="evidence" value="ECO:0000314"/>
    <property type="project" value="RGD"/>
</dbReference>
<dbReference type="GO" id="GO:0098685">
    <property type="term" value="C:Schaffer collateral - CA1 synapse"/>
    <property type="evidence" value="ECO:0000314"/>
    <property type="project" value="SynGO"/>
</dbReference>
<dbReference type="GO" id="GO:0030141">
    <property type="term" value="C:secretory granule"/>
    <property type="evidence" value="ECO:0000314"/>
    <property type="project" value="RGD"/>
</dbReference>
<dbReference type="GO" id="GO:0035861">
    <property type="term" value="C:site of double-strand break"/>
    <property type="evidence" value="ECO:0000250"/>
    <property type="project" value="UniProtKB"/>
</dbReference>
<dbReference type="GO" id="GO:0045202">
    <property type="term" value="C:synapse"/>
    <property type="evidence" value="ECO:0000266"/>
    <property type="project" value="RGD"/>
</dbReference>
<dbReference type="GO" id="GO:0030672">
    <property type="term" value="C:synaptic vesicle membrane"/>
    <property type="evidence" value="ECO:0000266"/>
    <property type="project" value="RGD"/>
</dbReference>
<dbReference type="GO" id="GO:0061835">
    <property type="term" value="C:ventral surface of cell"/>
    <property type="evidence" value="ECO:0000314"/>
    <property type="project" value="RGD"/>
</dbReference>
<dbReference type="GO" id="GO:0051015">
    <property type="term" value="F:actin filament binding"/>
    <property type="evidence" value="ECO:0000318"/>
    <property type="project" value="GO_Central"/>
</dbReference>
<dbReference type="GO" id="GO:0035650">
    <property type="term" value="F:AP-1 adaptor complex binding"/>
    <property type="evidence" value="ECO:0000314"/>
    <property type="project" value="MGI"/>
</dbReference>
<dbReference type="GO" id="GO:0071933">
    <property type="term" value="F:Arp2/3 complex binding"/>
    <property type="evidence" value="ECO:0000314"/>
    <property type="project" value="MGI"/>
</dbReference>
<dbReference type="GO" id="GO:0051117">
    <property type="term" value="F:ATPase binding"/>
    <property type="evidence" value="ECO:0000353"/>
    <property type="project" value="RGD"/>
</dbReference>
<dbReference type="GO" id="GO:0035254">
    <property type="term" value="F:glutamate receptor binding"/>
    <property type="evidence" value="ECO:0000353"/>
    <property type="project" value="RGD"/>
</dbReference>
<dbReference type="GO" id="GO:0019894">
    <property type="term" value="F:kinesin binding"/>
    <property type="evidence" value="ECO:0000314"/>
    <property type="project" value="MGI"/>
</dbReference>
<dbReference type="GO" id="GO:0044877">
    <property type="term" value="F:protein-containing complex binding"/>
    <property type="evidence" value="ECO:0000353"/>
    <property type="project" value="RGD"/>
</dbReference>
<dbReference type="GO" id="GO:0005200">
    <property type="term" value="F:structural constituent of cytoskeleton"/>
    <property type="evidence" value="ECO:0000266"/>
    <property type="project" value="RGD"/>
</dbReference>
<dbReference type="GO" id="GO:0030041">
    <property type="term" value="P:actin filament polymerization"/>
    <property type="evidence" value="ECO:0007669"/>
    <property type="project" value="InterPro"/>
</dbReference>
<dbReference type="GO" id="GO:0034314">
    <property type="term" value="P:Arp2/3 complex-mediated actin nucleation"/>
    <property type="evidence" value="ECO:0000266"/>
    <property type="project" value="RGD"/>
</dbReference>
<dbReference type="GO" id="GO:0071364">
    <property type="term" value="P:cellular response to epidermal growth factor stimulus"/>
    <property type="evidence" value="ECO:0000315"/>
    <property type="project" value="RGD"/>
</dbReference>
<dbReference type="GO" id="GO:0070301">
    <property type="term" value="P:cellular response to hydrogen peroxide"/>
    <property type="evidence" value="ECO:0000270"/>
    <property type="project" value="RGD"/>
</dbReference>
<dbReference type="GO" id="GO:1990090">
    <property type="term" value="P:cellular response to nerve growth factor stimulus"/>
    <property type="evidence" value="ECO:0000270"/>
    <property type="project" value="RGD"/>
</dbReference>
<dbReference type="GO" id="GO:0036120">
    <property type="term" value="P:cellular response to platelet-derived growth factor stimulus"/>
    <property type="evidence" value="ECO:0000314"/>
    <property type="project" value="RGD"/>
</dbReference>
<dbReference type="GO" id="GO:0072752">
    <property type="term" value="P:cellular response to rapamycin"/>
    <property type="evidence" value="ECO:0000314"/>
    <property type="project" value="RGD"/>
</dbReference>
<dbReference type="GO" id="GO:0035556">
    <property type="term" value="P:intracellular signal transduction"/>
    <property type="evidence" value="ECO:0000314"/>
    <property type="project" value="RGD"/>
</dbReference>
<dbReference type="GO" id="GO:0030838">
    <property type="term" value="P:positive regulation of actin filament polymerization"/>
    <property type="evidence" value="ECO:0000266"/>
    <property type="project" value="RGD"/>
</dbReference>
<dbReference type="GO" id="GO:2000814">
    <property type="term" value="P:positive regulation of barbed-end actin filament capping"/>
    <property type="evidence" value="ECO:0000315"/>
    <property type="project" value="RGD"/>
</dbReference>
<dbReference type="GO" id="GO:0051491">
    <property type="term" value="P:positive regulation of filopodium assembly"/>
    <property type="evidence" value="ECO:0000315"/>
    <property type="project" value="RGD"/>
</dbReference>
<dbReference type="GO" id="GO:0010592">
    <property type="term" value="P:positive regulation of lamellipodium assembly"/>
    <property type="evidence" value="ECO:0000315"/>
    <property type="project" value="RGD"/>
</dbReference>
<dbReference type="GO" id="GO:0071803">
    <property type="term" value="P:positive regulation of podosome assembly"/>
    <property type="evidence" value="ECO:0000315"/>
    <property type="project" value="RGD"/>
</dbReference>
<dbReference type="GO" id="GO:0090314">
    <property type="term" value="P:positive regulation of protein targeting to membrane"/>
    <property type="evidence" value="ECO:0000315"/>
    <property type="project" value="RGD"/>
</dbReference>
<dbReference type="GO" id="GO:0014911">
    <property type="term" value="P:positive regulation of smooth muscle cell migration"/>
    <property type="evidence" value="ECO:0000315"/>
    <property type="project" value="RGD"/>
</dbReference>
<dbReference type="GO" id="GO:1900026">
    <property type="term" value="P:positive regulation of substrate adhesion-dependent cell spreading"/>
    <property type="evidence" value="ECO:0000266"/>
    <property type="project" value="RGD"/>
</dbReference>
<dbReference type="GO" id="GO:0032956">
    <property type="term" value="P:regulation of actin cytoskeleton organization"/>
    <property type="evidence" value="ECO:0000315"/>
    <property type="project" value="RGD"/>
</dbReference>
<dbReference type="GO" id="GO:0034021">
    <property type="term" value="P:response to silicon dioxide"/>
    <property type="evidence" value="ECO:0000270"/>
    <property type="project" value="RGD"/>
</dbReference>
<dbReference type="FunFam" id="3.30.1460.20:FF:000002">
    <property type="entry name" value="Arp2/3 complex 34 kDa subunit"/>
    <property type="match status" value="1"/>
</dbReference>
<dbReference type="FunFam" id="3.30.1460.20:FF:000004">
    <property type="entry name" value="Arp2/3 complex 34 kDa subunit"/>
    <property type="match status" value="1"/>
</dbReference>
<dbReference type="Gene3D" id="3.30.1460.20">
    <property type="match status" value="2"/>
</dbReference>
<dbReference type="InterPro" id="IPR007188">
    <property type="entry name" value="ARPC2"/>
</dbReference>
<dbReference type="InterPro" id="IPR034666">
    <property type="entry name" value="ARPC2/4"/>
</dbReference>
<dbReference type="PANTHER" id="PTHR12058:SF0">
    <property type="entry name" value="ACTIN-RELATED PROTEIN 2_3 COMPLEX SUBUNIT 2"/>
    <property type="match status" value="1"/>
</dbReference>
<dbReference type="PANTHER" id="PTHR12058">
    <property type="entry name" value="ARP2/3 COMPLEX 34 KDA SUBUNIT"/>
    <property type="match status" value="1"/>
</dbReference>
<dbReference type="Pfam" id="PF04045">
    <property type="entry name" value="P34-Arc"/>
    <property type="match status" value="1"/>
</dbReference>
<dbReference type="SUPFAM" id="SSF69645">
    <property type="entry name" value="Arp2/3 complex subunits"/>
    <property type="match status" value="2"/>
</dbReference>
<reference key="1">
    <citation type="journal article" date="2004" name="Nature">
        <title>Genome sequence of the Brown Norway rat yields insights into mammalian evolution.</title>
        <authorList>
            <person name="Gibbs R.A."/>
            <person name="Weinstock G.M."/>
            <person name="Metzker M.L."/>
            <person name="Muzny D.M."/>
            <person name="Sodergren E.J."/>
            <person name="Scherer S."/>
            <person name="Scott G."/>
            <person name="Steffen D."/>
            <person name="Worley K.C."/>
            <person name="Burch P.E."/>
            <person name="Okwuonu G."/>
            <person name="Hines S."/>
            <person name="Lewis L."/>
            <person name="Deramo C."/>
            <person name="Delgado O."/>
            <person name="Dugan-Rocha S."/>
            <person name="Miner G."/>
            <person name="Morgan M."/>
            <person name="Hawes A."/>
            <person name="Gill R."/>
            <person name="Holt R.A."/>
            <person name="Adams M.D."/>
            <person name="Amanatides P.G."/>
            <person name="Baden-Tillson H."/>
            <person name="Barnstead M."/>
            <person name="Chin S."/>
            <person name="Evans C.A."/>
            <person name="Ferriera S."/>
            <person name="Fosler C."/>
            <person name="Glodek A."/>
            <person name="Gu Z."/>
            <person name="Jennings D."/>
            <person name="Kraft C.L."/>
            <person name="Nguyen T."/>
            <person name="Pfannkoch C.M."/>
            <person name="Sitter C."/>
            <person name="Sutton G.G."/>
            <person name="Venter J.C."/>
            <person name="Woodage T."/>
            <person name="Smith D."/>
            <person name="Lee H.-M."/>
            <person name="Gustafson E."/>
            <person name="Cahill P."/>
            <person name="Kana A."/>
            <person name="Doucette-Stamm L."/>
            <person name="Weinstock K."/>
            <person name="Fechtel K."/>
            <person name="Weiss R.B."/>
            <person name="Dunn D.M."/>
            <person name="Green E.D."/>
            <person name="Blakesley R.W."/>
            <person name="Bouffard G.G."/>
            <person name="De Jong P.J."/>
            <person name="Osoegawa K."/>
            <person name="Zhu B."/>
            <person name="Marra M."/>
            <person name="Schein J."/>
            <person name="Bosdet I."/>
            <person name="Fjell C."/>
            <person name="Jones S."/>
            <person name="Krzywinski M."/>
            <person name="Mathewson C."/>
            <person name="Siddiqui A."/>
            <person name="Wye N."/>
            <person name="McPherson J."/>
            <person name="Zhao S."/>
            <person name="Fraser C.M."/>
            <person name="Shetty J."/>
            <person name="Shatsman S."/>
            <person name="Geer K."/>
            <person name="Chen Y."/>
            <person name="Abramzon S."/>
            <person name="Nierman W.C."/>
            <person name="Havlak P.H."/>
            <person name="Chen R."/>
            <person name="Durbin K.J."/>
            <person name="Egan A."/>
            <person name="Ren Y."/>
            <person name="Song X.-Z."/>
            <person name="Li B."/>
            <person name="Liu Y."/>
            <person name="Qin X."/>
            <person name="Cawley S."/>
            <person name="Cooney A.J."/>
            <person name="D'Souza L.M."/>
            <person name="Martin K."/>
            <person name="Wu J.Q."/>
            <person name="Gonzalez-Garay M.L."/>
            <person name="Jackson A.R."/>
            <person name="Kalafus K.J."/>
            <person name="McLeod M.P."/>
            <person name="Milosavljevic A."/>
            <person name="Virk D."/>
            <person name="Volkov A."/>
            <person name="Wheeler D.A."/>
            <person name="Zhang Z."/>
            <person name="Bailey J.A."/>
            <person name="Eichler E.E."/>
            <person name="Tuzun E."/>
            <person name="Birney E."/>
            <person name="Mongin E."/>
            <person name="Ureta-Vidal A."/>
            <person name="Woodwark C."/>
            <person name="Zdobnov E."/>
            <person name="Bork P."/>
            <person name="Suyama M."/>
            <person name="Torrents D."/>
            <person name="Alexandersson M."/>
            <person name="Trask B.J."/>
            <person name="Young J.M."/>
            <person name="Huang H."/>
            <person name="Wang H."/>
            <person name="Xing H."/>
            <person name="Daniels S."/>
            <person name="Gietzen D."/>
            <person name="Schmidt J."/>
            <person name="Stevens K."/>
            <person name="Vitt U."/>
            <person name="Wingrove J."/>
            <person name="Camara F."/>
            <person name="Mar Alba M."/>
            <person name="Abril J.F."/>
            <person name="Guigo R."/>
            <person name="Smit A."/>
            <person name="Dubchak I."/>
            <person name="Rubin E.M."/>
            <person name="Couronne O."/>
            <person name="Poliakov A."/>
            <person name="Huebner N."/>
            <person name="Ganten D."/>
            <person name="Goesele C."/>
            <person name="Hummel O."/>
            <person name="Kreitler T."/>
            <person name="Lee Y.-A."/>
            <person name="Monti J."/>
            <person name="Schulz H."/>
            <person name="Zimdahl H."/>
            <person name="Himmelbauer H."/>
            <person name="Lehrach H."/>
            <person name="Jacob H.J."/>
            <person name="Bromberg S."/>
            <person name="Gullings-Handley J."/>
            <person name="Jensen-Seaman M.I."/>
            <person name="Kwitek A.E."/>
            <person name="Lazar J."/>
            <person name="Pasko D."/>
            <person name="Tonellato P.J."/>
            <person name="Twigger S."/>
            <person name="Ponting C.P."/>
            <person name="Duarte J.M."/>
            <person name="Rice S."/>
            <person name="Goodstadt L."/>
            <person name="Beatson S.A."/>
            <person name="Emes R.D."/>
            <person name="Winter E.E."/>
            <person name="Webber C."/>
            <person name="Brandt P."/>
            <person name="Nyakatura G."/>
            <person name="Adetobi M."/>
            <person name="Chiaromonte F."/>
            <person name="Elnitski L."/>
            <person name="Eswara P."/>
            <person name="Hardison R.C."/>
            <person name="Hou M."/>
            <person name="Kolbe D."/>
            <person name="Makova K."/>
            <person name="Miller W."/>
            <person name="Nekrutenko A."/>
            <person name="Riemer C."/>
            <person name="Schwartz S."/>
            <person name="Taylor J."/>
            <person name="Yang S."/>
            <person name="Zhang Y."/>
            <person name="Lindpaintner K."/>
            <person name="Andrews T.D."/>
            <person name="Caccamo M."/>
            <person name="Clamp M."/>
            <person name="Clarke L."/>
            <person name="Curwen V."/>
            <person name="Durbin R.M."/>
            <person name="Eyras E."/>
            <person name="Searle S.M."/>
            <person name="Cooper G.M."/>
            <person name="Batzoglou S."/>
            <person name="Brudno M."/>
            <person name="Sidow A."/>
            <person name="Stone E.A."/>
            <person name="Payseur B.A."/>
            <person name="Bourque G."/>
            <person name="Lopez-Otin C."/>
            <person name="Puente X.S."/>
            <person name="Chakrabarti K."/>
            <person name="Chatterji S."/>
            <person name="Dewey C."/>
            <person name="Pachter L."/>
            <person name="Bray N."/>
            <person name="Yap V.B."/>
            <person name="Caspi A."/>
            <person name="Tesler G."/>
            <person name="Pevzner P.A."/>
            <person name="Haussler D."/>
            <person name="Roskin K.M."/>
            <person name="Baertsch R."/>
            <person name="Clawson H."/>
            <person name="Furey T.S."/>
            <person name="Hinrichs A.S."/>
            <person name="Karolchik D."/>
            <person name="Kent W.J."/>
            <person name="Rosenbloom K.R."/>
            <person name="Trumbower H."/>
            <person name="Weirauch M."/>
            <person name="Cooper D.N."/>
            <person name="Stenson P.D."/>
            <person name="Ma B."/>
            <person name="Brent M."/>
            <person name="Arumugam M."/>
            <person name="Shteynberg D."/>
            <person name="Copley R.R."/>
            <person name="Taylor M.S."/>
            <person name="Riethman H."/>
            <person name="Mudunuri U."/>
            <person name="Peterson J."/>
            <person name="Guyer M."/>
            <person name="Felsenfeld A."/>
            <person name="Old S."/>
            <person name="Mockrin S."/>
            <person name="Collins F.S."/>
        </authorList>
    </citation>
    <scope>NUCLEOTIDE SEQUENCE [LARGE SCALE GENOMIC DNA]</scope>
    <source>
        <strain>Brown Norway</strain>
    </source>
</reference>
<reference key="2">
    <citation type="journal article" date="2009" name="Proteomics">
        <title>Proteome profile of the mature rat olfactory bulb.</title>
        <authorList>
            <person name="Maurya D.K."/>
            <person name="Sundaram C.S."/>
            <person name="Bhargava P."/>
        </authorList>
    </citation>
    <scope>IDENTIFICATION BY MASS SPECTROMETRY</scope>
    <scope>SUBCELLULAR LOCATION</scope>
</reference>
<accession>P85970</accession>
<feature type="chain" id="PRO_0000349119" description="Actin-related protein 2/3 complex subunit 2">
    <location>
        <begin position="1"/>
        <end position="300"/>
    </location>
</feature>
<feature type="modified residue" description="N6-acetyllysine" evidence="1">
    <location>
        <position position="275"/>
    </location>
</feature>
<feature type="modified residue" description="N6-acetyllysine" evidence="1">
    <location>
        <position position="295"/>
    </location>
</feature>
<comment type="function">
    <text evidence="1">Actin-binding component of the Arp2/3 complex, a multiprotein complex that mediates actin polymerization upon stimulation by nucleation-promoting factor (NPF). The Arp2/3 complex mediates the formation of branched actin networks in the cytoplasm, providing the force for cell motility. Seems to contact the mother actin filament. In addition to its role in the cytoplasmic cytoskeleton, the Arp2/3 complex also promotes actin polymerization in the nucleus, thereby regulating gene transcription and repair of damaged DNA. The Arp2/3 complex promotes homologous recombination (HR) repair in response to DNA damage by promoting nuclear actin polymerization, leading to drive motility of double-strand breaks (DSBs).</text>
</comment>
<comment type="subunit">
    <text evidence="1 2">Component of the Arp2/3 complex composed of ACTR2/ARP2, ACTR3/ARP3, ARPC1B/p41-ARC, ARPC2/p34-ARC, ARPC3/p21-ARC, ARPC4/p20-ARC and ARPC5/p16-ARC (By similarity). Interacts with SHANK3; the interaction probably mediates the association of SHANK3 with the Arp2/3 complex (By similarity).</text>
</comment>
<comment type="subcellular location">
    <subcellularLocation>
        <location evidence="3">Cytoplasm</location>
        <location evidence="3">Cytoskeleton</location>
    </subcellularLocation>
    <subcellularLocation>
        <location evidence="1">Cell projection</location>
    </subcellularLocation>
    <subcellularLocation>
        <location evidence="2">Synapse</location>
        <location evidence="2">Synaptosome</location>
    </subcellularLocation>
    <subcellularLocation>
        <location evidence="1">Nucleus</location>
    </subcellularLocation>
</comment>
<comment type="similarity">
    <text evidence="4">Belongs to the ARPC2 family.</text>
</comment>
<organism>
    <name type="scientific">Rattus norvegicus</name>
    <name type="common">Rat</name>
    <dbReference type="NCBI Taxonomy" id="10116"/>
    <lineage>
        <taxon>Eukaryota</taxon>
        <taxon>Metazoa</taxon>
        <taxon>Chordata</taxon>
        <taxon>Craniata</taxon>
        <taxon>Vertebrata</taxon>
        <taxon>Euteleostomi</taxon>
        <taxon>Mammalia</taxon>
        <taxon>Eutheria</taxon>
        <taxon>Euarchontoglires</taxon>
        <taxon>Glires</taxon>
        <taxon>Rodentia</taxon>
        <taxon>Myomorpha</taxon>
        <taxon>Muroidea</taxon>
        <taxon>Muridae</taxon>
        <taxon>Murinae</taxon>
        <taxon>Rattus</taxon>
    </lineage>
</organism>
<evidence type="ECO:0000250" key="1">
    <source>
        <dbReference type="UniProtKB" id="O15144"/>
    </source>
</evidence>
<evidence type="ECO:0000250" key="2">
    <source>
        <dbReference type="UniProtKB" id="Q9CVB6"/>
    </source>
</evidence>
<evidence type="ECO:0000269" key="3">
    <source>
    </source>
</evidence>
<evidence type="ECO:0000305" key="4"/>
<sequence length="300" mass="34391">MILLEVNNRIIEETLALKFENAAAGNKPEAVEVTFADFDGVLYHISNPNGDKTKVMVSISLKFYKELQAHGADELLKRVYGSFLVNPESGYNVSLLYDLENLPASKDSIVHQAGMLKRNCFASVFEKYFQFQEEGKEGENRAVIHYRDDETMYVESKKDRVTVVFSTVFKDDDDVVIGKVFMQEFKEGRRASHTAPQVLFSHREPPLELKDTDAAVGDNIGYITFVLFPRHTNATARDNTINLIHTFRDYLHYHIKCSKAYIHTRMRAKTSDFLKVLNRARPDAEKKEMKTITRKTFSST</sequence>
<gene>
    <name evidence="1" type="primary">Arpc2</name>
</gene>